<accession>B1ZX46</accession>
<protein>
    <recommendedName>
        <fullName evidence="1">tRNA pseudouridine synthase B</fullName>
        <ecNumber evidence="1">5.4.99.25</ecNumber>
    </recommendedName>
    <alternativeName>
        <fullName evidence="1">tRNA pseudouridine(55) synthase</fullName>
        <shortName evidence="1">Psi55 synthase</shortName>
    </alternativeName>
    <alternativeName>
        <fullName evidence="1">tRNA pseudouridylate synthase</fullName>
    </alternativeName>
    <alternativeName>
        <fullName evidence="1">tRNA-uridine isomerase</fullName>
    </alternativeName>
</protein>
<dbReference type="EC" id="5.4.99.25" evidence="1"/>
<dbReference type="EMBL" id="CP001032">
    <property type="protein sequence ID" value="ACB76098.1"/>
    <property type="molecule type" value="Genomic_DNA"/>
</dbReference>
<dbReference type="RefSeq" id="WP_012375633.1">
    <property type="nucleotide sequence ID" value="NC_010571.1"/>
</dbReference>
<dbReference type="SMR" id="B1ZX46"/>
<dbReference type="STRING" id="452637.Oter_2817"/>
<dbReference type="KEGG" id="ote:Oter_2817"/>
<dbReference type="eggNOG" id="COG0130">
    <property type="taxonomic scope" value="Bacteria"/>
</dbReference>
<dbReference type="HOGENOM" id="CLU_032087_2_0_0"/>
<dbReference type="OrthoDB" id="9802309at2"/>
<dbReference type="Proteomes" id="UP000007013">
    <property type="component" value="Chromosome"/>
</dbReference>
<dbReference type="GO" id="GO:0003723">
    <property type="term" value="F:RNA binding"/>
    <property type="evidence" value="ECO:0007669"/>
    <property type="project" value="InterPro"/>
</dbReference>
<dbReference type="GO" id="GO:0160148">
    <property type="term" value="F:tRNA pseudouridine(55) synthase activity"/>
    <property type="evidence" value="ECO:0007669"/>
    <property type="project" value="UniProtKB-EC"/>
</dbReference>
<dbReference type="GO" id="GO:1990481">
    <property type="term" value="P:mRNA pseudouridine synthesis"/>
    <property type="evidence" value="ECO:0007669"/>
    <property type="project" value="TreeGrafter"/>
</dbReference>
<dbReference type="GO" id="GO:0031119">
    <property type="term" value="P:tRNA pseudouridine synthesis"/>
    <property type="evidence" value="ECO:0007669"/>
    <property type="project" value="UniProtKB-UniRule"/>
</dbReference>
<dbReference type="CDD" id="cd02573">
    <property type="entry name" value="PseudoU_synth_EcTruB"/>
    <property type="match status" value="1"/>
</dbReference>
<dbReference type="Gene3D" id="3.30.2350.10">
    <property type="entry name" value="Pseudouridine synthase"/>
    <property type="match status" value="1"/>
</dbReference>
<dbReference type="HAMAP" id="MF_01080">
    <property type="entry name" value="TruB_bact"/>
    <property type="match status" value="1"/>
</dbReference>
<dbReference type="InterPro" id="IPR020103">
    <property type="entry name" value="PsdUridine_synth_cat_dom_sf"/>
</dbReference>
<dbReference type="InterPro" id="IPR002501">
    <property type="entry name" value="PsdUridine_synth_N"/>
</dbReference>
<dbReference type="InterPro" id="IPR014780">
    <property type="entry name" value="tRNA_psdUridine_synth_TruB"/>
</dbReference>
<dbReference type="InterPro" id="IPR032819">
    <property type="entry name" value="TruB_C"/>
</dbReference>
<dbReference type="NCBIfam" id="TIGR00431">
    <property type="entry name" value="TruB"/>
    <property type="match status" value="1"/>
</dbReference>
<dbReference type="PANTHER" id="PTHR13767:SF2">
    <property type="entry name" value="PSEUDOURIDYLATE SYNTHASE TRUB1"/>
    <property type="match status" value="1"/>
</dbReference>
<dbReference type="PANTHER" id="PTHR13767">
    <property type="entry name" value="TRNA-PSEUDOURIDINE SYNTHASE"/>
    <property type="match status" value="1"/>
</dbReference>
<dbReference type="Pfam" id="PF16198">
    <property type="entry name" value="TruB_C_2"/>
    <property type="match status" value="1"/>
</dbReference>
<dbReference type="Pfam" id="PF01509">
    <property type="entry name" value="TruB_N"/>
    <property type="match status" value="1"/>
</dbReference>
<dbReference type="SUPFAM" id="SSF55120">
    <property type="entry name" value="Pseudouridine synthase"/>
    <property type="match status" value="1"/>
</dbReference>
<name>TRUB_OPITP</name>
<feature type="chain" id="PRO_1000213506" description="tRNA pseudouridine synthase B">
    <location>
        <begin position="1"/>
        <end position="241"/>
    </location>
</feature>
<feature type="active site" description="Nucleophile" evidence="1">
    <location>
        <position position="45"/>
    </location>
</feature>
<proteinExistence type="inferred from homology"/>
<evidence type="ECO:0000255" key="1">
    <source>
        <dbReference type="HAMAP-Rule" id="MF_01080"/>
    </source>
</evidence>
<sequence length="241" mass="26563">MIQPRKELDGVLLVDKPTAHTSHDVVARLRRKLNMKRIGHAGTLDPMATGLMILLIGKATTISQYLTSLDKEYEGTIELGKVTDSQDADGEVLSTLPVPPFTEAEIRAAMAGFMGDQYQTPPMYSAIKVDGVPLYKTARKGGEVEREPRFIRVSSFELTRFALPQFDFRLRCTKGTYVRTIAHDLGQRLGCGAHLAALRRTATDKFKLADALTLDAIEALPLPEIEKRLIPVYQAAPSIVG</sequence>
<keyword id="KW-0413">Isomerase</keyword>
<keyword id="KW-1185">Reference proteome</keyword>
<keyword id="KW-0819">tRNA processing</keyword>
<gene>
    <name evidence="1" type="primary">truB</name>
    <name type="ordered locus">Oter_2817</name>
</gene>
<reference key="1">
    <citation type="journal article" date="2011" name="J. Bacteriol.">
        <title>Genome sequence of the verrucomicrobium Opitutus terrae PB90-1, an abundant inhabitant of rice paddy soil ecosystems.</title>
        <authorList>
            <person name="van Passel M.W."/>
            <person name="Kant R."/>
            <person name="Palva A."/>
            <person name="Copeland A."/>
            <person name="Lucas S."/>
            <person name="Lapidus A."/>
            <person name="Glavina del Rio T."/>
            <person name="Pitluck S."/>
            <person name="Goltsman E."/>
            <person name="Clum A."/>
            <person name="Sun H."/>
            <person name="Schmutz J."/>
            <person name="Larimer F.W."/>
            <person name="Land M.L."/>
            <person name="Hauser L."/>
            <person name="Kyrpides N."/>
            <person name="Mikhailova N."/>
            <person name="Richardson P.P."/>
            <person name="Janssen P.H."/>
            <person name="de Vos W.M."/>
            <person name="Smidt H."/>
        </authorList>
    </citation>
    <scope>NUCLEOTIDE SEQUENCE [LARGE SCALE GENOMIC DNA]</scope>
    <source>
        <strain>DSM 11246 / JCM 15787 / PB90-1</strain>
    </source>
</reference>
<organism>
    <name type="scientific">Opitutus terrae (strain DSM 11246 / JCM 15787 / PB90-1)</name>
    <dbReference type="NCBI Taxonomy" id="452637"/>
    <lineage>
        <taxon>Bacteria</taxon>
        <taxon>Pseudomonadati</taxon>
        <taxon>Verrucomicrobiota</taxon>
        <taxon>Opitutia</taxon>
        <taxon>Opitutales</taxon>
        <taxon>Opitutaceae</taxon>
        <taxon>Opitutus</taxon>
    </lineage>
</organism>
<comment type="function">
    <text evidence="1">Responsible for synthesis of pseudouridine from uracil-55 in the psi GC loop of transfer RNAs.</text>
</comment>
<comment type="catalytic activity">
    <reaction evidence="1">
        <text>uridine(55) in tRNA = pseudouridine(55) in tRNA</text>
        <dbReference type="Rhea" id="RHEA:42532"/>
        <dbReference type="Rhea" id="RHEA-COMP:10101"/>
        <dbReference type="Rhea" id="RHEA-COMP:10102"/>
        <dbReference type="ChEBI" id="CHEBI:65314"/>
        <dbReference type="ChEBI" id="CHEBI:65315"/>
        <dbReference type="EC" id="5.4.99.25"/>
    </reaction>
</comment>
<comment type="similarity">
    <text evidence="1">Belongs to the pseudouridine synthase TruB family. Type 1 subfamily.</text>
</comment>